<reference key="1">
    <citation type="journal article" date="1999" name="Nature">
        <title>Sequence and analysis of chromosome 4 of the plant Arabidopsis thaliana.</title>
        <authorList>
            <person name="Mayer K.F.X."/>
            <person name="Schueller C."/>
            <person name="Wambutt R."/>
            <person name="Murphy G."/>
            <person name="Volckaert G."/>
            <person name="Pohl T."/>
            <person name="Duesterhoeft A."/>
            <person name="Stiekema W."/>
            <person name="Entian K.-D."/>
            <person name="Terryn N."/>
            <person name="Harris B."/>
            <person name="Ansorge W."/>
            <person name="Brandt P."/>
            <person name="Grivell L.A."/>
            <person name="Rieger M."/>
            <person name="Weichselgartner M."/>
            <person name="de Simone V."/>
            <person name="Obermaier B."/>
            <person name="Mache R."/>
            <person name="Mueller M."/>
            <person name="Kreis M."/>
            <person name="Delseny M."/>
            <person name="Puigdomenech P."/>
            <person name="Watson M."/>
            <person name="Schmidtheini T."/>
            <person name="Reichert B."/>
            <person name="Portetelle D."/>
            <person name="Perez-Alonso M."/>
            <person name="Boutry M."/>
            <person name="Bancroft I."/>
            <person name="Vos P."/>
            <person name="Hoheisel J."/>
            <person name="Zimmermann W."/>
            <person name="Wedler H."/>
            <person name="Ridley P."/>
            <person name="Langham S.-A."/>
            <person name="McCullagh B."/>
            <person name="Bilham L."/>
            <person name="Robben J."/>
            <person name="van der Schueren J."/>
            <person name="Grymonprez B."/>
            <person name="Chuang Y.-J."/>
            <person name="Vandenbussche F."/>
            <person name="Braeken M."/>
            <person name="Weltjens I."/>
            <person name="Voet M."/>
            <person name="Bastiaens I."/>
            <person name="Aert R."/>
            <person name="Defoor E."/>
            <person name="Weitzenegger T."/>
            <person name="Bothe G."/>
            <person name="Ramsperger U."/>
            <person name="Hilbert H."/>
            <person name="Braun M."/>
            <person name="Holzer E."/>
            <person name="Brandt A."/>
            <person name="Peters S."/>
            <person name="van Staveren M."/>
            <person name="Dirkse W."/>
            <person name="Mooijman P."/>
            <person name="Klein Lankhorst R."/>
            <person name="Rose M."/>
            <person name="Hauf J."/>
            <person name="Koetter P."/>
            <person name="Berneiser S."/>
            <person name="Hempel S."/>
            <person name="Feldpausch M."/>
            <person name="Lamberth S."/>
            <person name="Van den Daele H."/>
            <person name="De Keyser A."/>
            <person name="Buysshaert C."/>
            <person name="Gielen J."/>
            <person name="Villarroel R."/>
            <person name="De Clercq R."/>
            <person name="van Montagu M."/>
            <person name="Rogers J."/>
            <person name="Cronin A."/>
            <person name="Quail M.A."/>
            <person name="Bray-Allen S."/>
            <person name="Clark L."/>
            <person name="Doggett J."/>
            <person name="Hall S."/>
            <person name="Kay M."/>
            <person name="Lennard N."/>
            <person name="McLay K."/>
            <person name="Mayes R."/>
            <person name="Pettett A."/>
            <person name="Rajandream M.A."/>
            <person name="Lyne M."/>
            <person name="Benes V."/>
            <person name="Rechmann S."/>
            <person name="Borkova D."/>
            <person name="Bloecker H."/>
            <person name="Scharfe M."/>
            <person name="Grimm M."/>
            <person name="Loehnert T.-H."/>
            <person name="Dose S."/>
            <person name="de Haan M."/>
            <person name="Maarse A.C."/>
            <person name="Schaefer M."/>
            <person name="Mueller-Auer S."/>
            <person name="Gabel C."/>
            <person name="Fuchs M."/>
            <person name="Fartmann B."/>
            <person name="Granderath K."/>
            <person name="Dauner D."/>
            <person name="Herzl A."/>
            <person name="Neumann S."/>
            <person name="Argiriou A."/>
            <person name="Vitale D."/>
            <person name="Liguori R."/>
            <person name="Piravandi E."/>
            <person name="Massenet O."/>
            <person name="Quigley F."/>
            <person name="Clabauld G."/>
            <person name="Muendlein A."/>
            <person name="Felber R."/>
            <person name="Schnabl S."/>
            <person name="Hiller R."/>
            <person name="Schmidt W."/>
            <person name="Lecharny A."/>
            <person name="Aubourg S."/>
            <person name="Chefdor F."/>
            <person name="Cooke R."/>
            <person name="Berger C."/>
            <person name="Monfort A."/>
            <person name="Casacuberta E."/>
            <person name="Gibbons T."/>
            <person name="Weber N."/>
            <person name="Vandenbol M."/>
            <person name="Bargues M."/>
            <person name="Terol J."/>
            <person name="Torres A."/>
            <person name="Perez-Perez A."/>
            <person name="Purnelle B."/>
            <person name="Bent E."/>
            <person name="Johnson S."/>
            <person name="Tacon D."/>
            <person name="Jesse T."/>
            <person name="Heijnen L."/>
            <person name="Schwarz S."/>
            <person name="Scholler P."/>
            <person name="Heber S."/>
            <person name="Francs P."/>
            <person name="Bielke C."/>
            <person name="Frishman D."/>
            <person name="Haase D."/>
            <person name="Lemcke K."/>
            <person name="Mewes H.-W."/>
            <person name="Stocker S."/>
            <person name="Zaccaria P."/>
            <person name="Bevan M."/>
            <person name="Wilson R.K."/>
            <person name="de la Bastide M."/>
            <person name="Habermann K."/>
            <person name="Parnell L."/>
            <person name="Dedhia N."/>
            <person name="Gnoj L."/>
            <person name="Schutz K."/>
            <person name="Huang E."/>
            <person name="Spiegel L."/>
            <person name="Sekhon M."/>
            <person name="Murray J."/>
            <person name="Sheet P."/>
            <person name="Cordes M."/>
            <person name="Abu-Threideh J."/>
            <person name="Stoneking T."/>
            <person name="Kalicki J."/>
            <person name="Graves T."/>
            <person name="Harmon G."/>
            <person name="Edwards J."/>
            <person name="Latreille P."/>
            <person name="Courtney L."/>
            <person name="Cloud J."/>
            <person name="Abbott A."/>
            <person name="Scott K."/>
            <person name="Johnson D."/>
            <person name="Minx P."/>
            <person name="Bentley D."/>
            <person name="Fulton B."/>
            <person name="Miller N."/>
            <person name="Greco T."/>
            <person name="Kemp K."/>
            <person name="Kramer J."/>
            <person name="Fulton L."/>
            <person name="Mardis E."/>
            <person name="Dante M."/>
            <person name="Pepin K."/>
            <person name="Hillier L.W."/>
            <person name="Nelson J."/>
            <person name="Spieth J."/>
            <person name="Ryan E."/>
            <person name="Andrews S."/>
            <person name="Geisel C."/>
            <person name="Layman D."/>
            <person name="Du H."/>
            <person name="Ali J."/>
            <person name="Berghoff A."/>
            <person name="Jones K."/>
            <person name="Drone K."/>
            <person name="Cotton M."/>
            <person name="Joshu C."/>
            <person name="Antonoiu B."/>
            <person name="Zidanic M."/>
            <person name="Strong C."/>
            <person name="Sun H."/>
            <person name="Lamar B."/>
            <person name="Yordan C."/>
            <person name="Ma P."/>
            <person name="Zhong J."/>
            <person name="Preston R."/>
            <person name="Vil D."/>
            <person name="Shekher M."/>
            <person name="Matero A."/>
            <person name="Shah R."/>
            <person name="Swaby I.K."/>
            <person name="O'Shaughnessy A."/>
            <person name="Rodriguez M."/>
            <person name="Hoffman J."/>
            <person name="Till S."/>
            <person name="Granat S."/>
            <person name="Shohdy N."/>
            <person name="Hasegawa A."/>
            <person name="Hameed A."/>
            <person name="Lodhi M."/>
            <person name="Johnson A."/>
            <person name="Chen E."/>
            <person name="Marra M.A."/>
            <person name="Martienssen R."/>
            <person name="McCombie W.R."/>
        </authorList>
    </citation>
    <scope>NUCLEOTIDE SEQUENCE [LARGE SCALE GENOMIC DNA]</scope>
    <source>
        <strain>cv. Columbia</strain>
    </source>
</reference>
<reference key="2">
    <citation type="journal article" date="2017" name="Plant J.">
        <title>Araport11: a complete reannotation of the Arabidopsis thaliana reference genome.</title>
        <authorList>
            <person name="Cheng C.Y."/>
            <person name="Krishnakumar V."/>
            <person name="Chan A.P."/>
            <person name="Thibaud-Nissen F."/>
            <person name="Schobel S."/>
            <person name="Town C.D."/>
        </authorList>
    </citation>
    <scope>GENOME REANNOTATION</scope>
    <source>
        <strain>cv. Columbia</strain>
    </source>
</reference>
<reference key="3">
    <citation type="journal article" date="2006" name="Plant Physiol.">
        <title>Production of reactive oxygen species by plant NADPH oxidases.</title>
        <authorList>
            <person name="Sagi M."/>
            <person name="Fluhr R."/>
        </authorList>
    </citation>
    <scope>GENE FAMILY</scope>
    <scope>NOMENCLATURE</scope>
</reference>
<feature type="chain" id="PRO_0000313759" description="Putative respiratory burst oxidase homolog protein G">
    <location>
        <begin position="1"/>
        <end position="849"/>
    </location>
</feature>
<feature type="topological domain" description="Cytoplasmic" evidence="3">
    <location>
        <begin position="1"/>
        <end position="303"/>
    </location>
</feature>
<feature type="transmembrane region" description="Helical; Name=1" evidence="3">
    <location>
        <begin position="304"/>
        <end position="324"/>
    </location>
</feature>
<feature type="topological domain" description="Extracellular" evidence="3">
    <location>
        <begin position="325"/>
        <end position="392"/>
    </location>
</feature>
<feature type="transmembrane region" description="Helical; Name=2" evidence="3">
    <location>
        <begin position="393"/>
        <end position="409"/>
    </location>
</feature>
<feature type="topological domain" description="Cytoplasmic" evidence="3">
    <location>
        <begin position="410"/>
        <end position="444"/>
    </location>
</feature>
<feature type="transmembrane region" description="Helical; Name=3" evidence="3">
    <location>
        <begin position="445"/>
        <end position="465"/>
    </location>
</feature>
<feature type="topological domain" description="Extracellular" evidence="3">
    <location>
        <begin position="466"/>
        <end position="489"/>
    </location>
</feature>
<feature type="transmembrane region" description="Helical; Name=4" evidence="3">
    <location>
        <begin position="490"/>
        <end position="510"/>
    </location>
</feature>
<feature type="topological domain" description="Cytoplasmic" evidence="3">
    <location>
        <begin position="511"/>
        <end position="518"/>
    </location>
</feature>
<feature type="transmembrane region" description="Helical; Name=5" evidence="1">
    <location>
        <begin position="519"/>
        <end position="536"/>
    </location>
</feature>
<feature type="topological domain" description="Extracellular" evidence="3">
    <location>
        <begin position="537"/>
        <end position="659"/>
    </location>
</feature>
<feature type="transmembrane region" description="Helical; Name=6" evidence="3">
    <location>
        <begin position="660"/>
        <end position="680"/>
    </location>
</feature>
<feature type="topological domain" description="Cytoplasmic" evidence="3">
    <location>
        <begin position="681"/>
        <end position="849"/>
    </location>
</feature>
<feature type="domain" description="EF-hand 1" evidence="4">
    <location>
        <begin position="176"/>
        <end position="211"/>
    </location>
</feature>
<feature type="domain" description="EF-hand 2" evidence="4">
    <location>
        <begin position="220"/>
        <end position="255"/>
    </location>
</feature>
<feature type="domain" description="Ferric oxidoreductase">
    <location>
        <begin position="342"/>
        <end position="502"/>
    </location>
</feature>
<feature type="domain" description="FAD-binding FR-type" evidence="5">
    <location>
        <begin position="541"/>
        <end position="657"/>
    </location>
</feature>
<feature type="region of interest" description="Disordered" evidence="6">
    <location>
        <begin position="1"/>
        <end position="53"/>
    </location>
</feature>
<feature type="region of interest" description="EF-hand-like 1" evidence="1">
    <location>
        <begin position="118"/>
        <end position="128"/>
    </location>
</feature>
<feature type="region of interest" description="EF-hand-like 2" evidence="1">
    <location>
        <begin position="153"/>
        <end position="164"/>
    </location>
</feature>
<feature type="compositionally biased region" description="Basic and acidic residues" evidence="6">
    <location>
        <begin position="1"/>
        <end position="17"/>
    </location>
</feature>
<feature type="compositionally biased region" description="Low complexity" evidence="6">
    <location>
        <begin position="18"/>
        <end position="27"/>
    </location>
</feature>
<feature type="binding site" evidence="4">
    <location>
        <position position="189"/>
    </location>
    <ligand>
        <name>Ca(2+)</name>
        <dbReference type="ChEBI" id="CHEBI:29108"/>
    </ligand>
</feature>
<feature type="binding site" evidence="4">
    <location>
        <position position="191"/>
    </location>
    <ligand>
        <name>Ca(2+)</name>
        <dbReference type="ChEBI" id="CHEBI:29108"/>
    </ligand>
</feature>
<feature type="binding site" evidence="4">
    <location>
        <position position="193"/>
    </location>
    <ligand>
        <name>Ca(2+)</name>
        <dbReference type="ChEBI" id="CHEBI:29108"/>
    </ligand>
</feature>
<feature type="binding site" evidence="4">
    <location>
        <position position="195"/>
    </location>
    <ligand>
        <name>Ca(2+)</name>
        <dbReference type="ChEBI" id="CHEBI:29108"/>
    </ligand>
</feature>
<feature type="binding site" evidence="4">
    <location>
        <position position="200"/>
    </location>
    <ligand>
        <name>Ca(2+)</name>
        <dbReference type="ChEBI" id="CHEBI:29108"/>
    </ligand>
</feature>
<feature type="modified residue" description="Phosphoserine" evidence="2">
    <location>
        <position position="270"/>
    </location>
</feature>
<proteinExistence type="inferred from homology"/>
<dbReference type="EC" id="1.11.1.-"/>
<dbReference type="EC" id="1.6.3.-"/>
<dbReference type="EMBL" id="AL035523">
    <property type="protein sequence ID" value="CAB36751.1"/>
    <property type="status" value="ALT_SEQ"/>
    <property type="molecule type" value="Genomic_DNA"/>
</dbReference>
<dbReference type="EMBL" id="AL161562">
    <property type="protein sequence ID" value="CAB79418.1"/>
    <property type="status" value="ALT_SEQ"/>
    <property type="molecule type" value="Genomic_DNA"/>
</dbReference>
<dbReference type="EMBL" id="CP002687">
    <property type="protein sequence ID" value="AEE85005.1"/>
    <property type="molecule type" value="Genomic_DNA"/>
</dbReference>
<dbReference type="PIR" id="T05530">
    <property type="entry name" value="T05530"/>
</dbReference>
<dbReference type="RefSeq" id="NP_194239.2">
    <molecule id="Q9SW17-1"/>
    <property type="nucleotide sequence ID" value="NM_118641.3"/>
</dbReference>
<dbReference type="SMR" id="Q9SW17"/>
<dbReference type="FunCoup" id="Q9SW17">
    <property type="interactions" value="520"/>
</dbReference>
<dbReference type="STRING" id="3702.Q9SW17"/>
<dbReference type="PeroxiBase" id="3285">
    <property type="entry name" value="AtRboh07"/>
</dbReference>
<dbReference type="GlyGen" id="Q9SW17">
    <property type="glycosylation" value="1 site"/>
</dbReference>
<dbReference type="iPTMnet" id="Q9SW17"/>
<dbReference type="PaxDb" id="3702-AT4G25090.1"/>
<dbReference type="ProteomicsDB" id="225913">
    <molecule id="Q9SW17-1"/>
</dbReference>
<dbReference type="EnsemblPlants" id="AT4G25090.1">
    <molecule id="Q9SW17-1"/>
    <property type="protein sequence ID" value="AT4G25090.1"/>
    <property type="gene ID" value="AT4G25090"/>
</dbReference>
<dbReference type="GeneID" id="828612"/>
<dbReference type="Gramene" id="AT4G25090.1">
    <molecule id="Q9SW17-1"/>
    <property type="protein sequence ID" value="AT4G25090.1"/>
    <property type="gene ID" value="AT4G25090"/>
</dbReference>
<dbReference type="KEGG" id="ath:AT4G25090"/>
<dbReference type="Araport" id="AT4G25090"/>
<dbReference type="TAIR" id="AT4G25090">
    <property type="gene designation" value="ATRBOHG"/>
</dbReference>
<dbReference type="eggNOG" id="KOG0039">
    <property type="taxonomic scope" value="Eukaryota"/>
</dbReference>
<dbReference type="InParanoid" id="Q9SW17"/>
<dbReference type="OrthoDB" id="167398at2759"/>
<dbReference type="BioCyc" id="ARA:AT4G25090-MONOMER"/>
<dbReference type="PRO" id="PR:Q9SW17"/>
<dbReference type="Proteomes" id="UP000006548">
    <property type="component" value="Chromosome 4"/>
</dbReference>
<dbReference type="ExpressionAtlas" id="Q9SW17">
    <property type="expression patterns" value="baseline and differential"/>
</dbReference>
<dbReference type="GO" id="GO:0022626">
    <property type="term" value="C:cytosolic ribosome"/>
    <property type="evidence" value="ECO:0007005"/>
    <property type="project" value="TAIR"/>
</dbReference>
<dbReference type="GO" id="GO:0016020">
    <property type="term" value="C:membrane"/>
    <property type="evidence" value="ECO:0007669"/>
    <property type="project" value="UniProtKB-SubCell"/>
</dbReference>
<dbReference type="GO" id="GO:0000325">
    <property type="term" value="C:plant-type vacuole"/>
    <property type="evidence" value="ECO:0007005"/>
    <property type="project" value="TAIR"/>
</dbReference>
<dbReference type="GO" id="GO:0005509">
    <property type="term" value="F:calcium ion binding"/>
    <property type="evidence" value="ECO:0007669"/>
    <property type="project" value="InterPro"/>
</dbReference>
<dbReference type="GO" id="GO:0050664">
    <property type="term" value="F:oxidoreductase activity, acting on NAD(P)H, oxygen as acceptor"/>
    <property type="evidence" value="ECO:0007669"/>
    <property type="project" value="InterPro"/>
</dbReference>
<dbReference type="GO" id="GO:0004601">
    <property type="term" value="F:peroxidase activity"/>
    <property type="evidence" value="ECO:0007669"/>
    <property type="project" value="UniProtKB-KW"/>
</dbReference>
<dbReference type="CDD" id="cd00051">
    <property type="entry name" value="EFh"/>
    <property type="match status" value="1"/>
</dbReference>
<dbReference type="CDD" id="cd06186">
    <property type="entry name" value="NOX_Duox_like_FAD_NADP"/>
    <property type="match status" value="1"/>
</dbReference>
<dbReference type="FunFam" id="1.10.238.10:FF:000049">
    <property type="entry name" value="Respiratory burst oxidase homolog A"/>
    <property type="match status" value="1"/>
</dbReference>
<dbReference type="FunFam" id="2.40.30.10:FF:000120">
    <property type="entry name" value="Respiratory burst oxidase homolog protein C"/>
    <property type="match status" value="1"/>
</dbReference>
<dbReference type="FunFam" id="3.40.50.80:FF:000007">
    <property type="entry name" value="Respiratory burst oxidase protein A"/>
    <property type="match status" value="1"/>
</dbReference>
<dbReference type="Gene3D" id="1.10.238.10">
    <property type="entry name" value="EF-hand"/>
    <property type="match status" value="1"/>
</dbReference>
<dbReference type="Gene3D" id="3.40.50.80">
    <property type="entry name" value="Nucleotide-binding domain of ferredoxin-NADP reductase (FNR) module"/>
    <property type="match status" value="1"/>
</dbReference>
<dbReference type="Gene3D" id="2.40.30.10">
    <property type="entry name" value="Translation factors"/>
    <property type="match status" value="1"/>
</dbReference>
<dbReference type="InterPro" id="IPR000778">
    <property type="entry name" value="Cyt_b245_heavy_chain"/>
</dbReference>
<dbReference type="InterPro" id="IPR011992">
    <property type="entry name" value="EF-hand-dom_pair"/>
</dbReference>
<dbReference type="InterPro" id="IPR018247">
    <property type="entry name" value="EF_Hand_1_Ca_BS"/>
</dbReference>
<dbReference type="InterPro" id="IPR002048">
    <property type="entry name" value="EF_hand_dom"/>
</dbReference>
<dbReference type="InterPro" id="IPR013112">
    <property type="entry name" value="FAD-bd_8"/>
</dbReference>
<dbReference type="InterPro" id="IPR017927">
    <property type="entry name" value="FAD-bd_FR_type"/>
</dbReference>
<dbReference type="InterPro" id="IPR013130">
    <property type="entry name" value="Fe3_Rdtase_TM_dom"/>
</dbReference>
<dbReference type="InterPro" id="IPR013121">
    <property type="entry name" value="Fe_red_NAD-bd_6"/>
</dbReference>
<dbReference type="InterPro" id="IPR039261">
    <property type="entry name" value="FNR_nucleotide-bd"/>
</dbReference>
<dbReference type="InterPro" id="IPR013623">
    <property type="entry name" value="NADPH_Ox"/>
</dbReference>
<dbReference type="InterPro" id="IPR050369">
    <property type="entry name" value="RBOH/FRE"/>
</dbReference>
<dbReference type="InterPro" id="IPR017938">
    <property type="entry name" value="Riboflavin_synthase-like_b-brl"/>
</dbReference>
<dbReference type="PANTHER" id="PTHR11972">
    <property type="entry name" value="NADPH OXIDASE"/>
    <property type="match status" value="1"/>
</dbReference>
<dbReference type="PANTHER" id="PTHR11972:SF158">
    <property type="entry name" value="RESPIRATORY BURST OXIDASE HOMOLOG PROTEIN G-RELATED"/>
    <property type="match status" value="1"/>
</dbReference>
<dbReference type="Pfam" id="PF08022">
    <property type="entry name" value="FAD_binding_8"/>
    <property type="match status" value="1"/>
</dbReference>
<dbReference type="Pfam" id="PF01794">
    <property type="entry name" value="Ferric_reduct"/>
    <property type="match status" value="1"/>
</dbReference>
<dbReference type="Pfam" id="PF08030">
    <property type="entry name" value="NAD_binding_6"/>
    <property type="match status" value="1"/>
</dbReference>
<dbReference type="Pfam" id="PF08414">
    <property type="entry name" value="NADPH_Ox"/>
    <property type="match status" value="1"/>
</dbReference>
<dbReference type="PRINTS" id="PR00466">
    <property type="entry name" value="GP91PHOX"/>
</dbReference>
<dbReference type="SFLD" id="SFLDG01168">
    <property type="entry name" value="Ferric_reductase_subgroup_(FRE"/>
    <property type="match status" value="1"/>
</dbReference>
<dbReference type="SFLD" id="SFLDG01169">
    <property type="entry name" value="NADPH_oxidase_subgroup_(NOX)"/>
    <property type="match status" value="1"/>
</dbReference>
<dbReference type="SUPFAM" id="SSF47473">
    <property type="entry name" value="EF-hand"/>
    <property type="match status" value="1"/>
</dbReference>
<dbReference type="SUPFAM" id="SSF52343">
    <property type="entry name" value="Ferredoxin reductase-like, C-terminal NADP-linked domain"/>
    <property type="match status" value="1"/>
</dbReference>
<dbReference type="SUPFAM" id="SSF63380">
    <property type="entry name" value="Riboflavin synthase domain-like"/>
    <property type="match status" value="1"/>
</dbReference>
<dbReference type="PROSITE" id="PS00018">
    <property type="entry name" value="EF_HAND_1"/>
    <property type="match status" value="1"/>
</dbReference>
<dbReference type="PROSITE" id="PS50222">
    <property type="entry name" value="EF_HAND_2"/>
    <property type="match status" value="2"/>
</dbReference>
<dbReference type="PROSITE" id="PS51384">
    <property type="entry name" value="FAD_FR"/>
    <property type="match status" value="1"/>
</dbReference>
<sequence>MQRVSFEVKDTEAEKSSSEILSGSLPSTYRNPAMENVGNAVDDGSSVKNNPKLDMQKQNGLVKWFKKCLTMVSGESKAPRLDRSKSTAGQALKGLKIISKTDGNAAWTVVEKRYLKITANTDGLLLRSKFGECIGMNSKEFALELFDALARKSHLKGDVITETELKKFWEQINDKSFDSRLITFFDLMDKDSDGRLTEDEVREIIKLSSSANHLSCIQNKADEYAAMIMEELDPDHMGYIMMESLKKLLLQAETKSVSTDINSEERKELSDMLTESLKPTRDPNHLRRWYCQLRFFVLDSWQRVWVIALWLTIMAILFAYKYIQYKNRAVYEVLGPCVCLAKGAAETLKLNMALILLPVCRNTITWLRNKTRLGVFVPFDDNLNFHKVIAVGIAIGVAIHSVSHLACDFPLLIAATPAEYMPLGKFFGEEQPKRYLHFVKSTEGITGLVMVFLMVIAFTLAMPWFRRGKLEKKLPGPLKKLASFNAFWYTHHLFVIVYILLVLHGYYIYLNKEWYKKTTWMYLAVPVALYAYERLIRAFRSSIRTVKVLKMAAYPGKVLTLQMSKPTNFKYMSGQYMFVNCPAVSPFEWHPFSITSTPQDDYLSVHIKALGDWTEAIQGVFSEVSKPPPVGDMLNGANSPRFPKIMIDGPYGAPAQDYKKYEVVLLIGLGIGATPMISIIKDIINNTETKEQLSQMEKGSPQEQQGNKETFKTRRAYFYWVTKEQGTFDWFKNIMNEIAERDKSKVIELHNHCTSVYEEGDVRSALIRMLQSLNYAKNGLDIVAGTRVMSHFARPNWKNVYKQIAMDHPGANVGVFYCGAPVLTKELRQLALEFTHKTSTRFSFHKENF</sequence>
<organism>
    <name type="scientific">Arabidopsis thaliana</name>
    <name type="common">Mouse-ear cress</name>
    <dbReference type="NCBI Taxonomy" id="3702"/>
    <lineage>
        <taxon>Eukaryota</taxon>
        <taxon>Viridiplantae</taxon>
        <taxon>Streptophyta</taxon>
        <taxon>Embryophyta</taxon>
        <taxon>Tracheophyta</taxon>
        <taxon>Spermatophyta</taxon>
        <taxon>Magnoliopsida</taxon>
        <taxon>eudicotyledons</taxon>
        <taxon>Gunneridae</taxon>
        <taxon>Pentapetalae</taxon>
        <taxon>rosids</taxon>
        <taxon>malvids</taxon>
        <taxon>Brassicales</taxon>
        <taxon>Brassicaceae</taxon>
        <taxon>Camelineae</taxon>
        <taxon>Arabidopsis</taxon>
    </lineage>
</organism>
<protein>
    <recommendedName>
        <fullName>Putative respiratory burst oxidase homolog protein G</fullName>
        <ecNumber>1.11.1.-</ecNumber>
        <ecNumber>1.6.3.-</ecNumber>
    </recommendedName>
    <alternativeName>
        <fullName>NADPH oxidase RBOHG</fullName>
        <shortName>AtRBOHG</shortName>
    </alternativeName>
</protein>
<name>RBOHG_ARATH</name>
<evidence type="ECO:0000250" key="1"/>
<evidence type="ECO:0000250" key="2">
    <source>
        <dbReference type="UniProtKB" id="Q9FIJ0"/>
    </source>
</evidence>
<evidence type="ECO:0000255" key="3"/>
<evidence type="ECO:0000255" key="4">
    <source>
        <dbReference type="PROSITE-ProRule" id="PRU00448"/>
    </source>
</evidence>
<evidence type="ECO:0000255" key="5">
    <source>
        <dbReference type="PROSITE-ProRule" id="PRU00716"/>
    </source>
</evidence>
<evidence type="ECO:0000256" key="6">
    <source>
        <dbReference type="SAM" id="MobiDB-lite"/>
    </source>
</evidence>
<evidence type="ECO:0000305" key="7"/>
<comment type="function">
    <text>Calcium-dependent NADPH oxidase that generates superoxide.</text>
</comment>
<comment type="subunit">
    <text evidence="1">Monomer and homodimer.</text>
</comment>
<comment type="subcellular location">
    <subcellularLocation>
        <location evidence="7">Membrane</location>
        <topology evidence="7">Multi-pass membrane protein</topology>
    </subcellularLocation>
</comment>
<comment type="alternative products">
    <event type="alternative splicing"/>
    <isoform>
        <id>Q9SW17-1</id>
        <name>1</name>
        <sequence type="displayed"/>
    </isoform>
    <text>A number of isoforms are produced. According to EST sequences.</text>
</comment>
<comment type="similarity">
    <text evidence="7">Belongs to the RBOH (TC 5.B.1.3) family.</text>
</comment>
<comment type="sequence caution" evidence="7">
    <conflict type="erroneous gene model prediction">
        <sequence resource="EMBL-CDS" id="CAB36751"/>
    </conflict>
</comment>
<comment type="sequence caution" evidence="7">
    <conflict type="erroneous gene model prediction">
        <sequence resource="EMBL-CDS" id="CAB79418"/>
    </conflict>
</comment>
<gene>
    <name type="primary">RBOHG</name>
    <name type="ordered locus">At4g25090</name>
    <name type="ORF">F13M23.230</name>
</gene>
<keyword id="KW-0025">Alternative splicing</keyword>
<keyword id="KW-0106">Calcium</keyword>
<keyword id="KW-0274">FAD</keyword>
<keyword id="KW-0285">Flavoprotein</keyword>
<keyword id="KW-0472">Membrane</keyword>
<keyword id="KW-0479">Metal-binding</keyword>
<keyword id="KW-0521">NADP</keyword>
<keyword id="KW-0560">Oxidoreductase</keyword>
<keyword id="KW-0575">Peroxidase</keyword>
<keyword id="KW-0597">Phosphoprotein</keyword>
<keyword id="KW-1185">Reference proteome</keyword>
<keyword id="KW-0677">Repeat</keyword>
<keyword id="KW-0812">Transmembrane</keyword>
<keyword id="KW-1133">Transmembrane helix</keyword>
<accession>Q9SW17</accession>
<accession>F4JRU6</accession>